<organism>
    <name type="scientific">Rattus norvegicus</name>
    <name type="common">Rat</name>
    <dbReference type="NCBI Taxonomy" id="10116"/>
    <lineage>
        <taxon>Eukaryota</taxon>
        <taxon>Metazoa</taxon>
        <taxon>Chordata</taxon>
        <taxon>Craniata</taxon>
        <taxon>Vertebrata</taxon>
        <taxon>Euteleostomi</taxon>
        <taxon>Mammalia</taxon>
        <taxon>Eutheria</taxon>
        <taxon>Euarchontoglires</taxon>
        <taxon>Glires</taxon>
        <taxon>Rodentia</taxon>
        <taxon>Myomorpha</taxon>
        <taxon>Muroidea</taxon>
        <taxon>Muridae</taxon>
        <taxon>Murinae</taxon>
        <taxon>Rattus</taxon>
    </lineage>
</organism>
<name>CXXC4_RAT</name>
<comment type="function">
    <text evidence="1 2">Acts as a negative regulator of the Wnt signaling pathway via its interaction with DVL1 (By similarity). Binds preferentially to DNA containing cytidine-phosphate-guanosine (CpG) dinucleotides over CpH (H=A, T, and C), hemimethylated-CpG and hemimethylated-hydroxymethyl-CpG (By similarity).</text>
</comment>
<comment type="subunit">
    <text evidence="5 6">Interacts with the PDZ domain of DVL1.</text>
</comment>
<comment type="interaction">
    <interactant intactId="EBI-9344960">
        <id>Q9EQC9</id>
    </interactant>
    <interactant intactId="EBI-723489">
        <id>O14640</id>
        <label>DVL1</label>
    </interactant>
    <organismsDiffer>true</organismsDiffer>
    <experiments>5</experiments>
</comment>
<comment type="subcellular location">
    <subcellularLocation>
        <location evidence="5">Cytoplasm</location>
    </subcellularLocation>
</comment>
<comment type="tissue specificity">
    <text evidence="5">Highest expression in cerebrum, cerebellum and heart, and lower expression in thymus and testis.</text>
</comment>
<comment type="domain">
    <text evidence="2">The CXXC zinc finger mediates binding to CpG-DNA.</text>
</comment>
<evidence type="ECO:0000250" key="1">
    <source>
        <dbReference type="UniProtKB" id="Q6NXI8"/>
    </source>
</evidence>
<evidence type="ECO:0000250" key="2">
    <source>
        <dbReference type="UniProtKB" id="Q9H2H0"/>
    </source>
</evidence>
<evidence type="ECO:0000255" key="3">
    <source>
        <dbReference type="PROSITE-ProRule" id="PRU00509"/>
    </source>
</evidence>
<evidence type="ECO:0000256" key="4">
    <source>
        <dbReference type="SAM" id="MobiDB-lite"/>
    </source>
</evidence>
<evidence type="ECO:0000269" key="5">
    <source>
    </source>
</evidence>
<evidence type="ECO:0000269" key="6">
    <source>
    </source>
</evidence>
<dbReference type="EMBL" id="AF272158">
    <property type="protein sequence ID" value="AAG42071.1"/>
    <property type="molecule type" value="mRNA"/>
</dbReference>
<dbReference type="SMR" id="Q9EQC9"/>
<dbReference type="FunCoup" id="Q9EQC9">
    <property type="interactions" value="960"/>
</dbReference>
<dbReference type="IntAct" id="Q9EQC9">
    <property type="interactions" value="3"/>
</dbReference>
<dbReference type="STRING" id="10116.ENSRNOP00000067828"/>
<dbReference type="PhosphoSitePlus" id="Q9EQC9"/>
<dbReference type="PaxDb" id="10116-ENSRNOP00000067828"/>
<dbReference type="AGR" id="RGD:69228"/>
<dbReference type="RGD" id="69228">
    <property type="gene designation" value="Cxxc4"/>
</dbReference>
<dbReference type="eggNOG" id="ENOG502QQVJ">
    <property type="taxonomic scope" value="Eukaryota"/>
</dbReference>
<dbReference type="InParanoid" id="Q9EQC9"/>
<dbReference type="PhylomeDB" id="Q9EQC9"/>
<dbReference type="TreeFam" id="TF326617"/>
<dbReference type="PRO" id="PR:Q9EQC9"/>
<dbReference type="Proteomes" id="UP000002494">
    <property type="component" value="Unplaced"/>
</dbReference>
<dbReference type="GO" id="GO:0005737">
    <property type="term" value="C:cytoplasm"/>
    <property type="evidence" value="ECO:0000266"/>
    <property type="project" value="RGD"/>
</dbReference>
<dbReference type="GO" id="GO:0031410">
    <property type="term" value="C:cytoplasmic vesicle"/>
    <property type="evidence" value="ECO:0000266"/>
    <property type="project" value="RGD"/>
</dbReference>
<dbReference type="GO" id="GO:0005829">
    <property type="term" value="C:cytosol"/>
    <property type="evidence" value="ECO:0000304"/>
    <property type="project" value="Reactome"/>
</dbReference>
<dbReference type="GO" id="GO:0005634">
    <property type="term" value="C:nucleus"/>
    <property type="evidence" value="ECO:0000266"/>
    <property type="project" value="RGD"/>
</dbReference>
<dbReference type="GO" id="GO:0008327">
    <property type="term" value="F:methyl-CpG binding"/>
    <property type="evidence" value="ECO:0000250"/>
    <property type="project" value="UniProtKB"/>
</dbReference>
<dbReference type="GO" id="GO:0030165">
    <property type="term" value="F:PDZ domain binding"/>
    <property type="evidence" value="ECO:0000353"/>
    <property type="project" value="BHF-UCL"/>
</dbReference>
<dbReference type="GO" id="GO:0008270">
    <property type="term" value="F:zinc ion binding"/>
    <property type="evidence" value="ECO:0000250"/>
    <property type="project" value="UniProtKB"/>
</dbReference>
<dbReference type="GO" id="GO:0030178">
    <property type="term" value="P:negative regulation of Wnt signaling pathway"/>
    <property type="evidence" value="ECO:0000266"/>
    <property type="project" value="RGD"/>
</dbReference>
<dbReference type="GO" id="GO:0016055">
    <property type="term" value="P:Wnt signaling pathway"/>
    <property type="evidence" value="ECO:0000266"/>
    <property type="project" value="RGD"/>
</dbReference>
<dbReference type="InterPro" id="IPR040388">
    <property type="entry name" value="CXXC4/CXXC5"/>
</dbReference>
<dbReference type="InterPro" id="IPR002857">
    <property type="entry name" value="Znf_CXXC"/>
</dbReference>
<dbReference type="PANTHER" id="PTHR13419:SF1">
    <property type="entry name" value="CXXC-TYPE ZINC FINGER PROTEIN 4"/>
    <property type="match status" value="1"/>
</dbReference>
<dbReference type="PANTHER" id="PTHR13419">
    <property type="entry name" value="ZINC FINGER-CONTAINING"/>
    <property type="match status" value="1"/>
</dbReference>
<dbReference type="Pfam" id="PF02008">
    <property type="entry name" value="zf-CXXC"/>
    <property type="match status" value="1"/>
</dbReference>
<dbReference type="PROSITE" id="PS51058">
    <property type="entry name" value="ZF_CXXC"/>
    <property type="match status" value="1"/>
</dbReference>
<keyword id="KW-0963">Cytoplasm</keyword>
<keyword id="KW-0238">DNA-binding</keyword>
<keyword id="KW-0479">Metal-binding</keyword>
<keyword id="KW-1185">Reference proteome</keyword>
<keyword id="KW-0879">Wnt signaling pathway</keyword>
<keyword id="KW-0862">Zinc</keyword>
<keyword id="KW-0863">Zinc-finger</keyword>
<accession>Q9EQC9</accession>
<reference key="1">
    <citation type="journal article" date="2001" name="Mol. Cell. Biol.">
        <title>Inhibition of the Wnt signaling pathway by Idax, a novel Dvl-binding protein.</title>
        <authorList>
            <person name="Hino S."/>
            <person name="Kishida S."/>
            <person name="Michiue T."/>
            <person name="Fukui A."/>
            <person name="Sakamoto I."/>
            <person name="Takada S."/>
            <person name="Asashima M."/>
            <person name="Kikuchi A."/>
        </authorList>
    </citation>
    <scope>NUCLEOTIDE SEQUENCE [MRNA]</scope>
    <scope>SUBCELLULAR LOCATION</scope>
    <scope>TISSUE SPECIFICITY</scope>
    <scope>INTERACTION WITH DVL1</scope>
</reference>
<reference key="2">
    <citation type="journal article" date="2004" name="Biochem. Biophys. Res. Commun.">
        <title>Interaction between the internal motif KTXXXI of Idax and mDvl PDZ domain.</title>
        <authorList>
            <person name="London T.B.C."/>
            <person name="Lee H.-J."/>
            <person name="Shao Y."/>
            <person name="Zheng J."/>
        </authorList>
    </citation>
    <scope>INTERACTION WITH DVL1</scope>
</reference>
<feature type="chain" id="PRO_0000317544" description="CXXC-type zinc finger protein 4">
    <location>
        <begin position="1"/>
        <end position="198"/>
    </location>
</feature>
<feature type="zinc finger region" description="CXXC-type" evidence="3">
    <location>
        <begin position="132"/>
        <end position="173"/>
    </location>
</feature>
<feature type="region of interest" description="Disordered" evidence="4">
    <location>
        <begin position="114"/>
        <end position="134"/>
    </location>
</feature>
<feature type="region of interest" description="Interaction with DVL1" evidence="5">
    <location>
        <begin position="161"/>
        <end position="166"/>
    </location>
</feature>
<feature type="binding site" evidence="3">
    <location>
        <position position="139"/>
    </location>
    <ligand>
        <name>Zn(2+)</name>
        <dbReference type="ChEBI" id="CHEBI:29105"/>
        <label>1</label>
    </ligand>
</feature>
<feature type="binding site" evidence="3">
    <location>
        <position position="142"/>
    </location>
    <ligand>
        <name>Zn(2+)</name>
        <dbReference type="ChEBI" id="CHEBI:29105"/>
        <label>1</label>
    </ligand>
</feature>
<feature type="binding site" evidence="3">
    <location>
        <position position="145"/>
    </location>
    <ligand>
        <name>Zn(2+)</name>
        <dbReference type="ChEBI" id="CHEBI:29105"/>
        <label>1</label>
    </ligand>
</feature>
<feature type="binding site" evidence="3">
    <location>
        <position position="151"/>
    </location>
    <ligand>
        <name>Zn(2+)</name>
        <dbReference type="ChEBI" id="CHEBI:29105"/>
        <label>2</label>
    </ligand>
</feature>
<feature type="binding site" evidence="3">
    <location>
        <position position="154"/>
    </location>
    <ligand>
        <name>Zn(2+)</name>
        <dbReference type="ChEBI" id="CHEBI:29105"/>
        <label>2</label>
    </ligand>
</feature>
<feature type="binding site" evidence="3">
    <location>
        <position position="157"/>
    </location>
    <ligand>
        <name>Zn(2+)</name>
        <dbReference type="ChEBI" id="CHEBI:29105"/>
        <label>2</label>
    </ligand>
</feature>
<feature type="binding site" evidence="3">
    <location>
        <position position="167"/>
    </location>
    <ligand>
        <name>Zn(2+)</name>
        <dbReference type="ChEBI" id="CHEBI:29105"/>
        <label>2</label>
    </ligand>
</feature>
<feature type="binding site" evidence="3">
    <location>
        <position position="172"/>
    </location>
    <ligand>
        <name>Zn(2+)</name>
        <dbReference type="ChEBI" id="CHEBI:29105"/>
        <label>1</label>
    </ligand>
</feature>
<sequence>MHHRNDSQRLGKAGCPPEPSLQMANTNFLSTLSPEHCRPLAGECMNKLKCGAAEAEIMNLPERVGTFSAIPALGGISLPPGVIVMTALHSPAAASAAVTDSAFQIANLADCPQNHSSSSSSSSGGAGGANPAKKKRKRCGVCVPCKRLINCGVCSSCRNRKTGHQICKFRKCEELKKKPGTSLERTPVPSAEAFRWFF</sequence>
<proteinExistence type="evidence at protein level"/>
<protein>
    <recommendedName>
        <fullName>CXXC-type zinc finger protein 4</fullName>
    </recommendedName>
    <alternativeName>
        <fullName>Inhibition of the Dvl and axin complex protein</fullName>
    </alternativeName>
</protein>
<gene>
    <name type="primary">Cxxc4</name>
    <name type="synonym">Idax</name>
</gene>